<dbReference type="EMBL" id="CP000884">
    <property type="protein sequence ID" value="ABX33825.1"/>
    <property type="molecule type" value="Genomic_DNA"/>
</dbReference>
<dbReference type="RefSeq" id="WP_012203111.1">
    <property type="nucleotide sequence ID" value="NC_010002.1"/>
</dbReference>
<dbReference type="SMR" id="A9BUC2"/>
<dbReference type="STRING" id="398578.Daci_1180"/>
<dbReference type="GeneID" id="24116936"/>
<dbReference type="KEGG" id="dac:Daci_1180"/>
<dbReference type="eggNOG" id="COG0830">
    <property type="taxonomic scope" value="Bacteria"/>
</dbReference>
<dbReference type="HOGENOM" id="CLU_049215_2_1_4"/>
<dbReference type="Proteomes" id="UP000000784">
    <property type="component" value="Chromosome"/>
</dbReference>
<dbReference type="GO" id="GO:0005737">
    <property type="term" value="C:cytoplasm"/>
    <property type="evidence" value="ECO:0007669"/>
    <property type="project" value="UniProtKB-SubCell"/>
</dbReference>
<dbReference type="GO" id="GO:0016151">
    <property type="term" value="F:nickel cation binding"/>
    <property type="evidence" value="ECO:0007669"/>
    <property type="project" value="UniProtKB-UniRule"/>
</dbReference>
<dbReference type="Gene3D" id="1.10.4190.10">
    <property type="entry name" value="Urease accessory protein UreF"/>
    <property type="match status" value="1"/>
</dbReference>
<dbReference type="HAMAP" id="MF_01385">
    <property type="entry name" value="UreF"/>
    <property type="match status" value="1"/>
</dbReference>
<dbReference type="InterPro" id="IPR002639">
    <property type="entry name" value="UreF"/>
</dbReference>
<dbReference type="InterPro" id="IPR038277">
    <property type="entry name" value="UreF_sf"/>
</dbReference>
<dbReference type="PANTHER" id="PTHR33620">
    <property type="entry name" value="UREASE ACCESSORY PROTEIN F"/>
    <property type="match status" value="1"/>
</dbReference>
<dbReference type="PANTHER" id="PTHR33620:SF1">
    <property type="entry name" value="UREASE ACCESSORY PROTEIN F"/>
    <property type="match status" value="1"/>
</dbReference>
<dbReference type="Pfam" id="PF01730">
    <property type="entry name" value="UreF"/>
    <property type="match status" value="1"/>
</dbReference>
<dbReference type="PIRSF" id="PIRSF009467">
    <property type="entry name" value="Ureas_acces_UreF"/>
    <property type="match status" value="1"/>
</dbReference>
<evidence type="ECO:0000255" key="1">
    <source>
        <dbReference type="HAMAP-Rule" id="MF_01385"/>
    </source>
</evidence>
<comment type="function">
    <text evidence="1">Required for maturation of urease via the functional incorporation of the urease nickel metallocenter.</text>
</comment>
<comment type="subunit">
    <text evidence="1">UreD, UreF and UreG form a complex that acts as a GTP-hydrolysis-dependent molecular chaperone, activating the urease apoprotein by helping to assemble the nickel containing metallocenter of UreC. The UreE protein probably delivers the nickel.</text>
</comment>
<comment type="subcellular location">
    <subcellularLocation>
        <location evidence="1">Cytoplasm</location>
    </subcellularLocation>
</comment>
<comment type="similarity">
    <text evidence="1">Belongs to the UreF family.</text>
</comment>
<proteinExistence type="inferred from homology"/>
<name>UREF_DELAS</name>
<protein>
    <recommendedName>
        <fullName evidence="1">Urease accessory protein UreF</fullName>
    </recommendedName>
</protein>
<feature type="chain" id="PRO_0000344119" description="Urease accessory protein UreF">
    <location>
        <begin position="1"/>
        <end position="238"/>
    </location>
</feature>
<reference key="1">
    <citation type="submission" date="2007-11" db="EMBL/GenBank/DDBJ databases">
        <title>Complete sequence of Delftia acidovorans DSM 14801 / SPH-1.</title>
        <authorList>
            <person name="Copeland A."/>
            <person name="Lucas S."/>
            <person name="Lapidus A."/>
            <person name="Barry K."/>
            <person name="Glavina del Rio T."/>
            <person name="Dalin E."/>
            <person name="Tice H."/>
            <person name="Pitluck S."/>
            <person name="Lowry S."/>
            <person name="Clum A."/>
            <person name="Schmutz J."/>
            <person name="Larimer F."/>
            <person name="Land M."/>
            <person name="Hauser L."/>
            <person name="Kyrpides N."/>
            <person name="Kim E."/>
            <person name="Schleheck D."/>
            <person name="Richardson P."/>
        </authorList>
    </citation>
    <scope>NUCLEOTIDE SEQUENCE [LARGE SCALE GENOMIC DNA]</scope>
    <source>
        <strain>DSM 14801 / SPH-1</strain>
    </source>
</reference>
<sequence length="238" mass="25766">MADLSIQGLCALLHLASPQLPVGGFSYSQGLEAAIEHGLVTDAGTARTWIADALAHGFARCEAPLWLLLRRAWSAGDEGAVHEWNQWFIASRDSREARAETLQMGWSLHSLLRSVPWGGEAFAPRIAQLGALVEGAGLAYPTAFACACAAVDADEDHALLAYGFAWLENQVAAAIKAVPLGQVAGQSLLLALHPLLEQAVCEARRRASEAPPRLDTMLPQWSVLQARHEHQYSRLFRS</sequence>
<organism>
    <name type="scientific">Delftia acidovorans (strain DSM 14801 / SPH-1)</name>
    <dbReference type="NCBI Taxonomy" id="398578"/>
    <lineage>
        <taxon>Bacteria</taxon>
        <taxon>Pseudomonadati</taxon>
        <taxon>Pseudomonadota</taxon>
        <taxon>Betaproteobacteria</taxon>
        <taxon>Burkholderiales</taxon>
        <taxon>Comamonadaceae</taxon>
        <taxon>Delftia</taxon>
    </lineage>
</organism>
<keyword id="KW-0143">Chaperone</keyword>
<keyword id="KW-0963">Cytoplasm</keyword>
<keyword id="KW-0996">Nickel insertion</keyword>
<keyword id="KW-1185">Reference proteome</keyword>
<gene>
    <name evidence="1" type="primary">ureF</name>
    <name type="ordered locus">Daci_1180</name>
</gene>
<accession>A9BUC2</accession>